<comment type="subcellular location">
    <subcellularLocation>
        <location evidence="4">Membrane</location>
        <topology evidence="4">Single-pass type I membrane protein</topology>
    </subcellularLocation>
</comment>
<comment type="alternative products">
    <event type="alternative splicing"/>
    <isoform>
        <id>Q6P3A4-1</id>
        <name>1</name>
        <sequence type="displayed"/>
    </isoform>
    <isoform>
        <id>Q6P3A4-2</id>
        <name>2</name>
        <sequence type="described" ref="VSP_030071"/>
    </isoform>
</comment>
<feature type="signal peptide" evidence="1">
    <location>
        <begin position="1"/>
        <end position="21"/>
    </location>
</feature>
<feature type="chain" id="PRO_0000313628" description="V-set and immunoglobulin domain-containing protein 8">
    <location>
        <begin position="22"/>
        <end position="417"/>
    </location>
</feature>
<feature type="topological domain" description="Extracellular" evidence="1">
    <location>
        <begin position="22"/>
        <end position="262"/>
    </location>
</feature>
<feature type="transmembrane region" description="Helical" evidence="1">
    <location>
        <begin position="263"/>
        <end position="283"/>
    </location>
</feature>
<feature type="topological domain" description="Cytoplasmic" evidence="1">
    <location>
        <begin position="284"/>
        <end position="417"/>
    </location>
</feature>
<feature type="domain" description="Ig-like V-type 1">
    <location>
        <begin position="22"/>
        <end position="140"/>
    </location>
</feature>
<feature type="domain" description="Ig-like V-type 2">
    <location>
        <begin position="145"/>
        <end position="256"/>
    </location>
</feature>
<feature type="disulfide bond" evidence="2">
    <location>
        <begin position="44"/>
        <end position="125"/>
    </location>
</feature>
<feature type="disulfide bond" evidence="2">
    <location>
        <begin position="166"/>
        <end position="238"/>
    </location>
</feature>
<feature type="splice variant" id="VSP_030071" description="In isoform 2." evidence="3">
    <location>
        <begin position="1"/>
        <end position="112"/>
    </location>
</feature>
<feature type="sequence conflict" description="In Ref. 1; AK037228." evidence="4" ref="1">
    <original>T</original>
    <variation>A</variation>
    <location>
        <position position="348"/>
    </location>
</feature>
<feature type="sequence conflict" description="In Ref. 1; AK037228." evidence="4" ref="1">
    <original>L</original>
    <variation>R</variation>
    <location>
        <position position="355"/>
    </location>
</feature>
<feature type="sequence conflict" description="In Ref. 1; AK037228." evidence="4" ref="1">
    <original>D</original>
    <variation>H</variation>
    <location>
        <position position="369"/>
    </location>
</feature>
<keyword id="KW-0025">Alternative splicing</keyword>
<keyword id="KW-1015">Disulfide bond</keyword>
<keyword id="KW-0393">Immunoglobulin domain</keyword>
<keyword id="KW-0472">Membrane</keyword>
<keyword id="KW-1185">Reference proteome</keyword>
<keyword id="KW-0677">Repeat</keyword>
<keyword id="KW-0732">Signal</keyword>
<keyword id="KW-0812">Transmembrane</keyword>
<keyword id="KW-1133">Transmembrane helix</keyword>
<accession>Q6P3A4</accession>
<sequence length="417" mass="44187">MGVRGALHLLLVCLSPALLSAVRINGDGQEVMYLAEGDNVRLGCPYLLDPEDLGTNSLDIEWMQVNSEPSHRENVFLTYQDKRIGHGNLPHLQQRVRFAASDPSQYDASINLMNLQVSDTATYECRVKKTTMATRKVIVTVQARPAVPMCWTEGHMSKGNDVVLKCFANGGSQPLSYKWAKISGHSHPYRAGAYHSQHSFHSELSYQESFHSTINQGLGNGDLLLKGINADDDGLYQCTVANHVGYSVCVVEVKVSDSQRVGMIVGAVLGSLLMLACLALGIWGLICCCCGGGGAGGARGAFGYGVGGGVGGGACGDLASEIRVDAEAPGCKASGRGSRVTHLLGYPTQNVSRSLRRKYAPPPCGGPEDVALVPRTASASCEAGPSPVYIKVKSAEPADCADCAQVEQRSCKDGLLV</sequence>
<reference key="1">
    <citation type="journal article" date="2005" name="Science">
        <title>The transcriptional landscape of the mammalian genome.</title>
        <authorList>
            <person name="Carninci P."/>
            <person name="Kasukawa T."/>
            <person name="Katayama S."/>
            <person name="Gough J."/>
            <person name="Frith M.C."/>
            <person name="Maeda N."/>
            <person name="Oyama R."/>
            <person name="Ravasi T."/>
            <person name="Lenhard B."/>
            <person name="Wells C."/>
            <person name="Kodzius R."/>
            <person name="Shimokawa K."/>
            <person name="Bajic V.B."/>
            <person name="Brenner S.E."/>
            <person name="Batalov S."/>
            <person name="Forrest A.R."/>
            <person name="Zavolan M."/>
            <person name="Davis M.J."/>
            <person name="Wilming L.G."/>
            <person name="Aidinis V."/>
            <person name="Allen J.E."/>
            <person name="Ambesi-Impiombato A."/>
            <person name="Apweiler R."/>
            <person name="Aturaliya R.N."/>
            <person name="Bailey T.L."/>
            <person name="Bansal M."/>
            <person name="Baxter L."/>
            <person name="Beisel K.W."/>
            <person name="Bersano T."/>
            <person name="Bono H."/>
            <person name="Chalk A.M."/>
            <person name="Chiu K.P."/>
            <person name="Choudhary V."/>
            <person name="Christoffels A."/>
            <person name="Clutterbuck D.R."/>
            <person name="Crowe M.L."/>
            <person name="Dalla E."/>
            <person name="Dalrymple B.P."/>
            <person name="de Bono B."/>
            <person name="Della Gatta G."/>
            <person name="di Bernardo D."/>
            <person name="Down T."/>
            <person name="Engstrom P."/>
            <person name="Fagiolini M."/>
            <person name="Faulkner G."/>
            <person name="Fletcher C.F."/>
            <person name="Fukushima T."/>
            <person name="Furuno M."/>
            <person name="Futaki S."/>
            <person name="Gariboldi M."/>
            <person name="Georgii-Hemming P."/>
            <person name="Gingeras T.R."/>
            <person name="Gojobori T."/>
            <person name="Green R.E."/>
            <person name="Gustincich S."/>
            <person name="Harbers M."/>
            <person name="Hayashi Y."/>
            <person name="Hensch T.K."/>
            <person name="Hirokawa N."/>
            <person name="Hill D."/>
            <person name="Huminiecki L."/>
            <person name="Iacono M."/>
            <person name="Ikeo K."/>
            <person name="Iwama A."/>
            <person name="Ishikawa T."/>
            <person name="Jakt M."/>
            <person name="Kanapin A."/>
            <person name="Katoh M."/>
            <person name="Kawasawa Y."/>
            <person name="Kelso J."/>
            <person name="Kitamura H."/>
            <person name="Kitano H."/>
            <person name="Kollias G."/>
            <person name="Krishnan S.P."/>
            <person name="Kruger A."/>
            <person name="Kummerfeld S.K."/>
            <person name="Kurochkin I.V."/>
            <person name="Lareau L.F."/>
            <person name="Lazarevic D."/>
            <person name="Lipovich L."/>
            <person name="Liu J."/>
            <person name="Liuni S."/>
            <person name="McWilliam S."/>
            <person name="Madan Babu M."/>
            <person name="Madera M."/>
            <person name="Marchionni L."/>
            <person name="Matsuda H."/>
            <person name="Matsuzawa S."/>
            <person name="Miki H."/>
            <person name="Mignone F."/>
            <person name="Miyake S."/>
            <person name="Morris K."/>
            <person name="Mottagui-Tabar S."/>
            <person name="Mulder N."/>
            <person name="Nakano N."/>
            <person name="Nakauchi H."/>
            <person name="Ng P."/>
            <person name="Nilsson R."/>
            <person name="Nishiguchi S."/>
            <person name="Nishikawa S."/>
            <person name="Nori F."/>
            <person name="Ohara O."/>
            <person name="Okazaki Y."/>
            <person name="Orlando V."/>
            <person name="Pang K.C."/>
            <person name="Pavan W.J."/>
            <person name="Pavesi G."/>
            <person name="Pesole G."/>
            <person name="Petrovsky N."/>
            <person name="Piazza S."/>
            <person name="Reed J."/>
            <person name="Reid J.F."/>
            <person name="Ring B.Z."/>
            <person name="Ringwald M."/>
            <person name="Rost B."/>
            <person name="Ruan Y."/>
            <person name="Salzberg S.L."/>
            <person name="Sandelin A."/>
            <person name="Schneider C."/>
            <person name="Schoenbach C."/>
            <person name="Sekiguchi K."/>
            <person name="Semple C.A."/>
            <person name="Seno S."/>
            <person name="Sessa L."/>
            <person name="Sheng Y."/>
            <person name="Shibata Y."/>
            <person name="Shimada H."/>
            <person name="Shimada K."/>
            <person name="Silva D."/>
            <person name="Sinclair B."/>
            <person name="Sperling S."/>
            <person name="Stupka E."/>
            <person name="Sugiura K."/>
            <person name="Sultana R."/>
            <person name="Takenaka Y."/>
            <person name="Taki K."/>
            <person name="Tammoja K."/>
            <person name="Tan S.L."/>
            <person name="Tang S."/>
            <person name="Taylor M.S."/>
            <person name="Tegner J."/>
            <person name="Teichmann S.A."/>
            <person name="Ueda H.R."/>
            <person name="van Nimwegen E."/>
            <person name="Verardo R."/>
            <person name="Wei C.L."/>
            <person name="Yagi K."/>
            <person name="Yamanishi H."/>
            <person name="Zabarovsky E."/>
            <person name="Zhu S."/>
            <person name="Zimmer A."/>
            <person name="Hide W."/>
            <person name="Bult C."/>
            <person name="Grimmond S.M."/>
            <person name="Teasdale R.D."/>
            <person name="Liu E.T."/>
            <person name="Brusic V."/>
            <person name="Quackenbush J."/>
            <person name="Wahlestedt C."/>
            <person name="Mattick J.S."/>
            <person name="Hume D.A."/>
            <person name="Kai C."/>
            <person name="Sasaki D."/>
            <person name="Tomaru Y."/>
            <person name="Fukuda S."/>
            <person name="Kanamori-Katayama M."/>
            <person name="Suzuki M."/>
            <person name="Aoki J."/>
            <person name="Arakawa T."/>
            <person name="Iida J."/>
            <person name="Imamura K."/>
            <person name="Itoh M."/>
            <person name="Kato T."/>
            <person name="Kawaji H."/>
            <person name="Kawagashira N."/>
            <person name="Kawashima T."/>
            <person name="Kojima M."/>
            <person name="Kondo S."/>
            <person name="Konno H."/>
            <person name="Nakano K."/>
            <person name="Ninomiya N."/>
            <person name="Nishio T."/>
            <person name="Okada M."/>
            <person name="Plessy C."/>
            <person name="Shibata K."/>
            <person name="Shiraki T."/>
            <person name="Suzuki S."/>
            <person name="Tagami M."/>
            <person name="Waki K."/>
            <person name="Watahiki A."/>
            <person name="Okamura-Oho Y."/>
            <person name="Suzuki H."/>
            <person name="Kawai J."/>
            <person name="Hayashizaki Y."/>
        </authorList>
    </citation>
    <scope>NUCLEOTIDE SEQUENCE [LARGE SCALE MRNA] (ISOFORM 1)</scope>
    <source>
        <tissue>Skin</tissue>
    </source>
</reference>
<reference key="2">
    <citation type="journal article" date="2004" name="Genome Res.">
        <title>The status, quality, and expansion of the NIH full-length cDNA project: the Mammalian Gene Collection (MGC).</title>
        <authorList>
            <consortium name="The MGC Project Team"/>
        </authorList>
    </citation>
    <scope>NUCLEOTIDE SEQUENCE [LARGE SCALE MRNA] (ISOFORM 2)</scope>
    <source>
        <tissue>Mammary gland</tissue>
    </source>
</reference>
<dbReference type="EMBL" id="AK037228">
    <property type="status" value="NOT_ANNOTATED_CDS"/>
    <property type="molecule type" value="mRNA"/>
</dbReference>
<dbReference type="EMBL" id="BC064106">
    <property type="protein sequence ID" value="AAH64106.1"/>
    <property type="molecule type" value="mRNA"/>
</dbReference>
<dbReference type="CCDS" id="CCDS15516.1">
    <molecule id="Q6P3A4-1"/>
</dbReference>
<dbReference type="RefSeq" id="NP_808391.2">
    <molecule id="Q6P3A4-1"/>
    <property type="nucleotide sequence ID" value="NM_177723.4"/>
</dbReference>
<dbReference type="SMR" id="Q6P3A4"/>
<dbReference type="BioGRID" id="232259">
    <property type="interactions" value="1"/>
</dbReference>
<dbReference type="FunCoup" id="Q6P3A4">
    <property type="interactions" value="106"/>
</dbReference>
<dbReference type="IntAct" id="Q6P3A4">
    <property type="interactions" value="1"/>
</dbReference>
<dbReference type="STRING" id="10090.ENSMUSP00000058008"/>
<dbReference type="iPTMnet" id="Q6P3A4"/>
<dbReference type="PhosphoSitePlus" id="Q6P3A4"/>
<dbReference type="PaxDb" id="10090-ENSMUSP00000058008"/>
<dbReference type="ProteomicsDB" id="297548">
    <molecule id="Q6P3A4-1"/>
</dbReference>
<dbReference type="ProteomicsDB" id="297549">
    <molecule id="Q6P3A4-2"/>
</dbReference>
<dbReference type="Pumba" id="Q6P3A4"/>
<dbReference type="Antibodypedia" id="34887">
    <property type="antibodies" value="123 antibodies from 15 providers"/>
</dbReference>
<dbReference type="DNASU" id="240916"/>
<dbReference type="Ensembl" id="ENSMUST00000061835.10">
    <molecule id="Q6P3A4-1"/>
    <property type="protein sequence ID" value="ENSMUSP00000058008.4"/>
    <property type="gene ID" value="ENSMUSG00000049598.10"/>
</dbReference>
<dbReference type="Ensembl" id="ENSMUST00000177086.2">
    <molecule id="Q6P3A4-2"/>
    <property type="protein sequence ID" value="ENSMUSP00000134997.2"/>
    <property type="gene ID" value="ENSMUSG00000049598.10"/>
</dbReference>
<dbReference type="GeneID" id="240916"/>
<dbReference type="KEGG" id="mmu:240916"/>
<dbReference type="UCSC" id="uc007dqs.2">
    <molecule id="Q6P3A4-1"/>
    <property type="organism name" value="mouse"/>
</dbReference>
<dbReference type="AGR" id="MGI:3642995"/>
<dbReference type="CTD" id="391123"/>
<dbReference type="MGI" id="MGI:3642995">
    <property type="gene designation" value="Vsig8"/>
</dbReference>
<dbReference type="VEuPathDB" id="HostDB:ENSMUSG00000049598"/>
<dbReference type="eggNOG" id="ENOG502RXSJ">
    <property type="taxonomic scope" value="Eukaryota"/>
</dbReference>
<dbReference type="GeneTree" id="ENSGT00940000161712"/>
<dbReference type="HOGENOM" id="CLU_040549_0_2_1"/>
<dbReference type="InParanoid" id="Q6P3A4"/>
<dbReference type="OMA" id="PSPIYVK"/>
<dbReference type="OrthoDB" id="10045577at2759"/>
<dbReference type="PhylomeDB" id="Q6P3A4"/>
<dbReference type="TreeFam" id="TF330875"/>
<dbReference type="BioGRID-ORCS" id="240916">
    <property type="hits" value="1 hit in 75 CRISPR screens"/>
</dbReference>
<dbReference type="PRO" id="PR:Q6P3A4"/>
<dbReference type="Proteomes" id="UP000000589">
    <property type="component" value="Chromosome 1"/>
</dbReference>
<dbReference type="RNAct" id="Q6P3A4">
    <property type="molecule type" value="protein"/>
</dbReference>
<dbReference type="Bgee" id="ENSMUSG00000049598">
    <property type="expression patterns" value="Expressed in lip and 34 other cell types or tissues"/>
</dbReference>
<dbReference type="GO" id="GO:0016020">
    <property type="term" value="C:membrane"/>
    <property type="evidence" value="ECO:0007669"/>
    <property type="project" value="UniProtKB-SubCell"/>
</dbReference>
<dbReference type="Gene3D" id="2.60.40.10">
    <property type="entry name" value="Immunoglobulins"/>
    <property type="match status" value="2"/>
</dbReference>
<dbReference type="InterPro" id="IPR007110">
    <property type="entry name" value="Ig-like_dom"/>
</dbReference>
<dbReference type="InterPro" id="IPR036179">
    <property type="entry name" value="Ig-like_dom_sf"/>
</dbReference>
<dbReference type="InterPro" id="IPR013783">
    <property type="entry name" value="Ig-like_fold"/>
</dbReference>
<dbReference type="InterPro" id="IPR003599">
    <property type="entry name" value="Ig_sub"/>
</dbReference>
<dbReference type="InterPro" id="IPR003598">
    <property type="entry name" value="Ig_sub2"/>
</dbReference>
<dbReference type="InterPro" id="IPR013106">
    <property type="entry name" value="Ig_V-set"/>
</dbReference>
<dbReference type="InterPro" id="IPR052871">
    <property type="entry name" value="V-set/Ig_domain"/>
</dbReference>
<dbReference type="PANTHER" id="PTHR45166">
    <property type="entry name" value="V-SET AND IMMUNOGLOBULIN DOMAIN-CONTAINING PROTEIN 8"/>
    <property type="match status" value="1"/>
</dbReference>
<dbReference type="PANTHER" id="PTHR45166:SF1">
    <property type="entry name" value="V-SET AND IMMUNOGLOBULIN DOMAIN-CONTAINING PROTEIN 8"/>
    <property type="match status" value="1"/>
</dbReference>
<dbReference type="Pfam" id="PF13927">
    <property type="entry name" value="Ig_3"/>
    <property type="match status" value="1"/>
</dbReference>
<dbReference type="Pfam" id="PF07686">
    <property type="entry name" value="V-set"/>
    <property type="match status" value="1"/>
</dbReference>
<dbReference type="SMART" id="SM00409">
    <property type="entry name" value="IG"/>
    <property type="match status" value="2"/>
</dbReference>
<dbReference type="SMART" id="SM00408">
    <property type="entry name" value="IGc2"/>
    <property type="match status" value="1"/>
</dbReference>
<dbReference type="SMART" id="SM00406">
    <property type="entry name" value="IGv"/>
    <property type="match status" value="1"/>
</dbReference>
<dbReference type="SUPFAM" id="SSF48726">
    <property type="entry name" value="Immunoglobulin"/>
    <property type="match status" value="2"/>
</dbReference>
<dbReference type="PROSITE" id="PS50835">
    <property type="entry name" value="IG_LIKE"/>
    <property type="match status" value="2"/>
</dbReference>
<gene>
    <name type="primary">Vsig8</name>
</gene>
<name>VSIG8_MOUSE</name>
<evidence type="ECO:0000255" key="1"/>
<evidence type="ECO:0000255" key="2">
    <source>
        <dbReference type="PROSITE-ProRule" id="PRU00114"/>
    </source>
</evidence>
<evidence type="ECO:0000303" key="3">
    <source>
    </source>
</evidence>
<evidence type="ECO:0000305" key="4"/>
<proteinExistence type="evidence at transcript level"/>
<protein>
    <recommendedName>
        <fullName>V-set and immunoglobulin domain-containing protein 8</fullName>
    </recommendedName>
</protein>
<organism>
    <name type="scientific">Mus musculus</name>
    <name type="common">Mouse</name>
    <dbReference type="NCBI Taxonomy" id="10090"/>
    <lineage>
        <taxon>Eukaryota</taxon>
        <taxon>Metazoa</taxon>
        <taxon>Chordata</taxon>
        <taxon>Craniata</taxon>
        <taxon>Vertebrata</taxon>
        <taxon>Euteleostomi</taxon>
        <taxon>Mammalia</taxon>
        <taxon>Eutheria</taxon>
        <taxon>Euarchontoglires</taxon>
        <taxon>Glires</taxon>
        <taxon>Rodentia</taxon>
        <taxon>Myomorpha</taxon>
        <taxon>Muroidea</taxon>
        <taxon>Muridae</taxon>
        <taxon>Murinae</taxon>
        <taxon>Mus</taxon>
        <taxon>Mus</taxon>
    </lineage>
</organism>